<accession>Q7DDJ2</accession>
<accession>Q9AQF0</accession>
<name>NHHA_NEIMB</name>
<dbReference type="EMBL" id="AF125375">
    <property type="protein sequence ID" value="AAK09243.1"/>
    <property type="molecule type" value="Genomic_DNA"/>
</dbReference>
<dbReference type="EMBL" id="AE002098">
    <property type="protein sequence ID" value="AAF41395.1"/>
    <property type="molecule type" value="Genomic_DNA"/>
</dbReference>
<dbReference type="RefSeq" id="NP_274028.1">
    <property type="nucleotide sequence ID" value="NC_003112.2"/>
</dbReference>
<dbReference type="RefSeq" id="WP_002222588.1">
    <property type="nucleotide sequence ID" value="NC_003112.2"/>
</dbReference>
<dbReference type="SMR" id="Q7DDJ2"/>
<dbReference type="STRING" id="122586.NMB0992"/>
<dbReference type="PaxDb" id="122586-NMB0992"/>
<dbReference type="KEGG" id="nme:NMB0992"/>
<dbReference type="PATRIC" id="fig|122586.8.peg.1257"/>
<dbReference type="HOGENOM" id="CLU_541568_0_0_4"/>
<dbReference type="InParanoid" id="Q7DDJ2"/>
<dbReference type="OrthoDB" id="1632057at2"/>
<dbReference type="Proteomes" id="UP000000425">
    <property type="component" value="Chromosome"/>
</dbReference>
<dbReference type="GO" id="GO:0009279">
    <property type="term" value="C:cell outer membrane"/>
    <property type="evidence" value="ECO:0007669"/>
    <property type="project" value="UniProtKB-SubCell"/>
</dbReference>
<dbReference type="GO" id="GO:0009986">
    <property type="term" value="C:cell surface"/>
    <property type="evidence" value="ECO:0007669"/>
    <property type="project" value="UniProtKB-SubCell"/>
</dbReference>
<dbReference type="GO" id="GO:0007155">
    <property type="term" value="P:cell adhesion"/>
    <property type="evidence" value="ECO:0007669"/>
    <property type="project" value="UniProtKB-KW"/>
</dbReference>
<dbReference type="GO" id="GO:0015031">
    <property type="term" value="P:protein transport"/>
    <property type="evidence" value="ECO:0007669"/>
    <property type="project" value="UniProtKB-KW"/>
</dbReference>
<dbReference type="GO" id="GO:0052067">
    <property type="term" value="P:symbiont-mediated perturbation of host phagocytosis"/>
    <property type="evidence" value="ECO:0000269"/>
    <property type="project" value="SigSci"/>
</dbReference>
<dbReference type="Gene3D" id="3.30.1300.30">
    <property type="entry name" value="GSPII I/J protein-like"/>
    <property type="match status" value="1"/>
</dbReference>
<dbReference type="Gene3D" id="3.90.1780.10">
    <property type="entry name" value="Trimeric adhesin"/>
    <property type="match status" value="1"/>
</dbReference>
<dbReference type="InterPro" id="IPR008635">
    <property type="entry name" value="Coiled_stalk_dom"/>
</dbReference>
<dbReference type="InterPro" id="IPR024973">
    <property type="entry name" value="ESPR"/>
</dbReference>
<dbReference type="InterPro" id="IPR054742">
    <property type="entry name" value="NhhA_Tpr-ring_dom"/>
</dbReference>
<dbReference type="InterPro" id="IPR045584">
    <property type="entry name" value="Pilin-like"/>
</dbReference>
<dbReference type="InterPro" id="IPR028230">
    <property type="entry name" value="TAA-Trp-ring"/>
</dbReference>
<dbReference type="InterPro" id="IPR037174">
    <property type="entry name" value="Trimeric_adhesin"/>
</dbReference>
<dbReference type="InterPro" id="IPR005594">
    <property type="entry name" value="YadA_C"/>
</dbReference>
<dbReference type="Pfam" id="PF13018">
    <property type="entry name" value="ESPR"/>
    <property type="match status" value="1"/>
</dbReference>
<dbReference type="Pfam" id="PF22414">
    <property type="entry name" value="Hia_Tpr_ring_dom"/>
    <property type="match status" value="1"/>
</dbReference>
<dbReference type="Pfam" id="PF15401">
    <property type="entry name" value="TAA-Trp-ring"/>
    <property type="match status" value="1"/>
</dbReference>
<dbReference type="Pfam" id="PF03895">
    <property type="entry name" value="YadA_anchor"/>
    <property type="match status" value="1"/>
</dbReference>
<dbReference type="Pfam" id="PF05662">
    <property type="entry name" value="YadA_stalk"/>
    <property type="match status" value="1"/>
</dbReference>
<dbReference type="SUPFAM" id="SSF54523">
    <property type="entry name" value="Pili subunits"/>
    <property type="match status" value="1"/>
</dbReference>
<dbReference type="SUPFAM" id="SSF101999">
    <property type="entry name" value="Trimeric adhesin"/>
    <property type="match status" value="2"/>
</dbReference>
<evidence type="ECO:0000250" key="1">
    <source>
        <dbReference type="UniProtKB" id="A1JUB7"/>
    </source>
</evidence>
<evidence type="ECO:0000255" key="2"/>
<evidence type="ECO:0000269" key="3">
    <source>
    </source>
</evidence>
<evidence type="ECO:0000303" key="4">
    <source>
    </source>
</evidence>
<evidence type="ECO:0000303" key="5">
    <source>
    </source>
</evidence>
<evidence type="ECO:0000305" key="6"/>
<evidence type="ECO:0000305" key="7">
    <source>
    </source>
</evidence>
<evidence type="ECO:0000312" key="8">
    <source>
        <dbReference type="EMBL" id="AAF41395.1"/>
    </source>
</evidence>
<comment type="function">
    <text evidence="3">Involved in adhesion of capsulated meningococci to host epithelial cells. Interacts with laminin and heparan sulfate, promoting the adherence to the extracellular matrix (ECM) components.</text>
</comment>
<comment type="subunit">
    <text evidence="3">Homotrimer.</text>
</comment>
<comment type="subcellular location">
    <subcellularLocation>
        <location evidence="3">Cell surface</location>
    </subcellularLocation>
    <subcellularLocation>
        <location evidence="3">Cell outer membrane</location>
    </subcellularLocation>
    <text evidence="3">The C-terminal translocator domain is localized in the outer membrane and the passenger domain is at the cell surface.</text>
</comment>
<comment type="domain">
    <text evidence="3">The signal peptide, cleaved at the inner membrane, guides the autotransporter protein to the periplasmic space. Then, insertion of the C-terminal translocator domain in the outer membrane forms a hydrophilic pore for the translocation of the passenger domain to the bacterial cell surface.</text>
</comment>
<comment type="disruption phenotype">
    <text evidence="3">Deletion of the gene decreases the ability to adhere to Chang epithelial cells.</text>
</comment>
<comment type="similarity">
    <text evidence="6">Belongs to the autotransporter-2 (AT-2) (TC 1.B.40) family.</text>
</comment>
<proteinExistence type="evidence at protein level"/>
<protein>
    <recommendedName>
        <fullName evidence="6">Autotransporter adhesin NhhA</fullName>
    </recommendedName>
    <alternativeName>
        <fullName evidence="4">Neisseria hia homolog</fullName>
    </alternativeName>
    <alternativeName>
        <fullName evidence="6">Type 5 secretion system autotransporter NhhA</fullName>
    </alternativeName>
</protein>
<keyword id="KW-0130">Cell adhesion</keyword>
<keyword id="KW-0998">Cell outer membrane</keyword>
<keyword id="KW-0472">Membrane</keyword>
<keyword id="KW-0653">Protein transport</keyword>
<keyword id="KW-1185">Reference proteome</keyword>
<keyword id="KW-0732">Signal</keyword>
<keyword id="KW-0812">Transmembrane</keyword>
<keyword id="KW-1134">Transmembrane beta strand</keyword>
<keyword id="KW-0813">Transport</keyword>
<keyword id="KW-0843">Virulence</keyword>
<sequence>MNKIYRIIWNSALNAWVVVSELTRNHTKRASATVKTAVLATLLFATVQASANNEEQEEDLYLDPVQRTVAVLIVNSDKEGTGEKEKVEENSDWAVYFNEKGVLTAREITLKAGDNLKIKQNGTNFTYSLKKDLTDLTSVGTEKLSFSANGNKVNITSDTKGLNFAKETAGTNGDTTVHLNGIGSTLTDTLLNTGATTNVTNDNVTDDEKKRAASVKDVLNAGWNIKGVKPGTTASDNVDFVRTYDTVEFLSADTKTTTVNVESKDNGKKTEVKIGAKTSVIKEKDGKLVTGKDKGENGSSTDEGEGLVTAKEVIDAVNKAGWRMKTTTANGQTGQADKFETVTSGTNVTFASGKGTTATVSKDDQGNITVMYDVNVGDALNVNQLQNSGWNLDSKAVAGSSGKVISGNVSPSKGKMDETVNINAGNNIEITRNGKNIDIATSMTPQFSSVSLGAGADAPTLSVDGDALNVGSKKDNKPVRITNVAPGVKEGDVTNVAQLKGVAQNLNNRIDNVDGNARAGIAQAIATAGLVQAYLPGKSMMAIGGGTYRGEAGYAIGYSSISDGGNWIIKGTASGNSRGHFGASASVGYQW</sequence>
<organism>
    <name type="scientific">Neisseria meningitidis serogroup B (strain ATCC BAA-335 / MC58)</name>
    <dbReference type="NCBI Taxonomy" id="122586"/>
    <lineage>
        <taxon>Bacteria</taxon>
        <taxon>Pseudomonadati</taxon>
        <taxon>Pseudomonadota</taxon>
        <taxon>Betaproteobacteria</taxon>
        <taxon>Neisseriales</taxon>
        <taxon>Neisseriaceae</taxon>
        <taxon>Neisseria</taxon>
    </lineage>
</organism>
<reference key="1">
    <citation type="journal article" date="2000" name="FEMS Immunol. Med. Microbiol.">
        <title>Identification and characterisation of a novel conserved outer membrane protein from Neisseria meningitidis.</title>
        <authorList>
            <person name="Peak I.R."/>
            <person name="Srikhanta Y."/>
            <person name="Dieckelmann M."/>
            <person name="Moxon E.R."/>
            <person name="Jennings M.P."/>
        </authorList>
    </citation>
    <scope>NUCLEOTIDE SEQUENCE [GENOMIC DNA]</scope>
    <source>
        <strain>ATCC BAA-335 / MC58</strain>
    </source>
</reference>
<reference key="2">
    <citation type="journal article" date="2000" name="Science">
        <title>Complete genome sequence of Neisseria meningitidis serogroup B strain MC58.</title>
        <authorList>
            <person name="Tettelin H."/>
            <person name="Saunders N.J."/>
            <person name="Heidelberg J.F."/>
            <person name="Jeffries A.C."/>
            <person name="Nelson K.E."/>
            <person name="Eisen J.A."/>
            <person name="Ketchum K.A."/>
            <person name="Hood D.W."/>
            <person name="Peden J.F."/>
            <person name="Dodson R.J."/>
            <person name="Nelson W.C."/>
            <person name="Gwinn M.L."/>
            <person name="DeBoy R.T."/>
            <person name="Peterson J.D."/>
            <person name="Hickey E.K."/>
            <person name="Haft D.H."/>
            <person name="Salzberg S.L."/>
            <person name="White O."/>
            <person name="Fleischmann R.D."/>
            <person name="Dougherty B.A."/>
            <person name="Mason T.M."/>
            <person name="Ciecko A."/>
            <person name="Parksey D.S."/>
            <person name="Blair E."/>
            <person name="Cittone H."/>
            <person name="Clark E.B."/>
            <person name="Cotton M.D."/>
            <person name="Utterback T.R."/>
            <person name="Khouri H.M."/>
            <person name="Qin H."/>
            <person name="Vamathevan J.J."/>
            <person name="Gill J."/>
            <person name="Scarlato V."/>
            <person name="Masignani V."/>
            <person name="Pizza M."/>
            <person name="Grandi G."/>
            <person name="Sun L."/>
            <person name="Smith H.O."/>
            <person name="Fraser C.M."/>
            <person name="Moxon E.R."/>
            <person name="Rappuoli R."/>
            <person name="Venter J.C."/>
        </authorList>
    </citation>
    <scope>NUCLEOTIDE SEQUENCE [LARGE SCALE GENOMIC DNA]</scope>
    <source>
        <strain>ATCC BAA-335 / MC58</strain>
    </source>
</reference>
<reference key="3">
    <citation type="journal article" date="2006" name="Mol. Microbiol.">
        <title>Neisseria meningitidis NhhA is a multifunctional trimeric autotransporter adhesin.</title>
        <authorList>
            <person name="Scarselli M."/>
            <person name="Serruto D."/>
            <person name="Montanari P."/>
            <person name="Capecchi B."/>
            <person name="Adu-Bobie J."/>
            <person name="Veggi D."/>
            <person name="Rappuoli R."/>
            <person name="Pizza M."/>
            <person name="Arico B."/>
        </authorList>
    </citation>
    <scope>FUNCTION</scope>
    <scope>SUBUNIT</scope>
    <scope>SUBCELLULAR LOCATION</scope>
    <scope>DOMAIN</scope>
    <scope>DISRUPTION PHENOTYPE</scope>
    <source>
        <strain>ATCC BAA-335 / MC58</strain>
    </source>
</reference>
<gene>
    <name evidence="4" type="primary">nhhA</name>
    <name evidence="5" type="synonym">GNA0992</name>
    <name evidence="8" type="synonym">hsf</name>
    <name evidence="8" type="ordered locus">NMB0992</name>
</gene>
<feature type="signal peptide" evidence="2">
    <location>
        <begin position="1"/>
        <end position="51"/>
    </location>
</feature>
<feature type="chain" id="PRO_5004287540" description="Autotransporter adhesin NhhA">
    <location>
        <begin position="52"/>
        <end position="591"/>
    </location>
</feature>
<feature type="transmembrane region" description="Beta stranded" evidence="1">
    <location>
        <begin position="537"/>
        <end position="547"/>
    </location>
</feature>
<feature type="transmembrane region" description="Beta stranded" evidence="1">
    <location>
        <begin position="551"/>
        <end position="561"/>
    </location>
</feature>
<feature type="transmembrane region" description="Beta stranded" evidence="1">
    <location>
        <begin position="570"/>
        <end position="576"/>
    </location>
</feature>
<feature type="transmembrane region" description="Beta stranded" evidence="1">
    <location>
        <begin position="580"/>
        <end position="591"/>
    </location>
</feature>
<feature type="region of interest" description="Surface exposed passenger domain" evidence="7">
    <location>
        <begin position="52"/>
        <end position="503"/>
    </location>
</feature>
<feature type="region of interest" description="Translocator domain" evidence="7">
    <location>
        <begin position="504"/>
        <end position="591"/>
    </location>
</feature>
<feature type="sequence conflict" description="In Ref. 1; AAK09243." evidence="6" ref="1">
    <original>EQEE</original>
    <variation>RPRKK</variation>
    <location>
        <begin position="55"/>
        <end position="58"/>
    </location>
</feature>
<feature type="sequence conflict" description="In Ref. 1; AAK09243." evidence="6" ref="1">
    <original>A</original>
    <variation>V</variation>
    <location>
        <position position="276"/>
    </location>
</feature>